<accession>P29411</accession>
<evidence type="ECO:0000250" key="1">
    <source>
        <dbReference type="UniProtKB" id="P08760"/>
    </source>
</evidence>
<evidence type="ECO:0000250" key="2">
    <source>
        <dbReference type="UniProtKB" id="Q9UIJ7"/>
    </source>
</evidence>
<evidence type="ECO:0000250" key="3">
    <source>
        <dbReference type="UniProtKB" id="Q9WTP7"/>
    </source>
</evidence>
<evidence type="ECO:0000255" key="4">
    <source>
        <dbReference type="HAMAP-Rule" id="MF_03169"/>
    </source>
</evidence>
<evidence type="ECO:0000303" key="5">
    <source>
    </source>
</evidence>
<evidence type="ECO:0000312" key="6">
    <source>
        <dbReference type="RGD" id="619885"/>
    </source>
</evidence>
<sequence>MGASGRLLRAVIMGAPGSGKGTGSSRITKHFELKHLSSGDLLRQNMLQGTEIAVLAKSFIDQGKLIPDDDMTRLALHELKNLTQCSWLLDGFPRTLPQAEALDRVYQIDTVINLNVPFEVIKLRLTARWIHPASGRVYNIEFNPPKTVGIDDLTGEPLIQREDDKPETVIKRLKAYEAQTEPVLQYYQKKGVLETFSGTETNKIRPHVYSFLQMKVPETIQKASVTP</sequence>
<proteinExistence type="evidence at transcript level"/>
<gene>
    <name evidence="5 6" type="primary">Ak3</name>
    <name evidence="6" type="synonym">Ak3l1</name>
</gene>
<comment type="function">
    <text evidence="2">Mitochondrial adenylate kinase with a specific GTP:AMP phosphotransferase activity. Could also use ITP as phosphate donor. Its physiological function is to recycle GTP into GDP which is necessary for the TCA cycle in the mitochondrial matrix.</text>
</comment>
<comment type="catalytic activity">
    <reaction evidence="2 4">
        <text>a ribonucleoside 5'-triphosphate + AMP = a ribonucleoside 5'-diphosphate + ADP</text>
        <dbReference type="Rhea" id="RHEA:13749"/>
        <dbReference type="ChEBI" id="CHEBI:57930"/>
        <dbReference type="ChEBI" id="CHEBI:61557"/>
        <dbReference type="ChEBI" id="CHEBI:456215"/>
        <dbReference type="ChEBI" id="CHEBI:456216"/>
        <dbReference type="EC" id="2.7.4.10"/>
    </reaction>
</comment>
<comment type="catalytic activity">
    <reaction evidence="2">
        <text>GTP + AMP = GDP + ADP</text>
        <dbReference type="Rhea" id="RHEA:29863"/>
        <dbReference type="ChEBI" id="CHEBI:37565"/>
        <dbReference type="ChEBI" id="CHEBI:58189"/>
        <dbReference type="ChEBI" id="CHEBI:456215"/>
        <dbReference type="ChEBI" id="CHEBI:456216"/>
    </reaction>
</comment>
<comment type="catalytic activity">
    <reaction evidence="2">
        <text>ITP + AMP = IDP + ADP</text>
        <dbReference type="Rhea" id="RHEA:29867"/>
        <dbReference type="ChEBI" id="CHEBI:58280"/>
        <dbReference type="ChEBI" id="CHEBI:61402"/>
        <dbReference type="ChEBI" id="CHEBI:456215"/>
        <dbReference type="ChEBI" id="CHEBI:456216"/>
    </reaction>
</comment>
<comment type="subunit">
    <text evidence="2 4">Monomer.</text>
</comment>
<comment type="subcellular location">
    <subcellularLocation>
        <location evidence="2 4">Mitochondrion matrix</location>
    </subcellularLocation>
</comment>
<comment type="domain">
    <text evidence="2 4">Consists of three domains, a large central CORE domain and two small peripheral domains, NMPbind and LID, which undergo movements during catalysis. The LID domain closes over the site of phosphoryl transfer upon GTP binding. Assembling and dissambling the active center during each catalytic cycle provides an effective means to prevent GTP hydrolysis.</text>
</comment>
<comment type="similarity">
    <text evidence="4">Belongs to the adenylate kinase family. AK3 subfamily.</text>
</comment>
<keyword id="KW-0007">Acetylation</keyword>
<keyword id="KW-0342">GTP-binding</keyword>
<keyword id="KW-0418">Kinase</keyword>
<keyword id="KW-0496">Mitochondrion</keyword>
<keyword id="KW-0547">Nucleotide-binding</keyword>
<keyword id="KW-0597">Phosphoprotein</keyword>
<keyword id="KW-1185">Reference proteome</keyword>
<keyword id="KW-0808">Transferase</keyword>
<name>KAD3_RAT</name>
<reference key="1">
    <citation type="journal article" date="1993" name="J. Biochem.">
        <title>Tissue-specific and developmentally regulated expression of the genes encoding adenylate kinase isozymes.</title>
        <authorList>
            <person name="Tanabe T."/>
            <person name="Yamada M."/>
            <person name="Noma T."/>
            <person name="Kajii T."/>
            <person name="Nakazawa A."/>
        </authorList>
    </citation>
    <scope>NUCLEOTIDE SEQUENCE [MRNA]</scope>
</reference>
<feature type="chain" id="PRO_0000158925" description="GTP:AMP phosphotransferase AK3, mitochondrial">
    <location>
        <begin position="1"/>
        <end position="227"/>
    </location>
</feature>
<feature type="region of interest" description="NMP" evidence="4">
    <location>
        <begin position="37"/>
        <end position="66"/>
    </location>
</feature>
<feature type="region of interest" description="LID" evidence="4">
    <location>
        <begin position="127"/>
        <end position="164"/>
    </location>
</feature>
<feature type="binding site" evidence="2">
    <location>
        <position position="17"/>
    </location>
    <ligand>
        <name>GTP</name>
        <dbReference type="ChEBI" id="CHEBI:37565"/>
    </ligand>
</feature>
<feature type="binding site" evidence="2">
    <location>
        <position position="19"/>
    </location>
    <ligand>
        <name>GTP</name>
        <dbReference type="ChEBI" id="CHEBI:37565"/>
    </ligand>
</feature>
<feature type="binding site" evidence="2">
    <location>
        <position position="20"/>
    </location>
    <ligand>
        <name>GTP</name>
        <dbReference type="ChEBI" id="CHEBI:37565"/>
    </ligand>
</feature>
<feature type="binding site" evidence="2">
    <location>
        <position position="21"/>
    </location>
    <ligand>
        <name>GTP</name>
        <dbReference type="ChEBI" id="CHEBI:37565"/>
    </ligand>
</feature>
<feature type="binding site" evidence="2">
    <location>
        <position position="22"/>
    </location>
    <ligand>
        <name>GTP</name>
        <dbReference type="ChEBI" id="CHEBI:37565"/>
    </ligand>
</feature>
<feature type="binding site" evidence="2">
    <location>
        <position position="38"/>
    </location>
    <ligand>
        <name>AMP</name>
        <dbReference type="ChEBI" id="CHEBI:456215"/>
    </ligand>
</feature>
<feature type="binding site" evidence="2">
    <location>
        <position position="43"/>
    </location>
    <ligand>
        <name>AMP</name>
        <dbReference type="ChEBI" id="CHEBI:456215"/>
    </ligand>
</feature>
<feature type="binding site" evidence="2">
    <location>
        <position position="64"/>
    </location>
    <ligand>
        <name>AMP</name>
        <dbReference type="ChEBI" id="CHEBI:456215"/>
    </ligand>
</feature>
<feature type="binding site" evidence="2">
    <location>
        <position position="91"/>
    </location>
    <ligand>
        <name>AMP</name>
        <dbReference type="ChEBI" id="CHEBI:456215"/>
    </ligand>
</feature>
<feature type="binding site" evidence="1">
    <location>
        <position position="94"/>
    </location>
    <ligand>
        <name>AMP</name>
        <dbReference type="ChEBI" id="CHEBI:456215"/>
    </ligand>
</feature>
<feature type="binding site" evidence="2">
    <location>
        <position position="98"/>
    </location>
    <ligand>
        <name>AMP</name>
        <dbReference type="ChEBI" id="CHEBI:456215"/>
    </ligand>
</feature>
<feature type="binding site" evidence="2">
    <location>
        <position position="128"/>
    </location>
    <ligand>
        <name>GTP</name>
        <dbReference type="ChEBI" id="CHEBI:37565"/>
    </ligand>
</feature>
<feature type="binding site" evidence="2">
    <location>
        <position position="138"/>
    </location>
    <ligand>
        <name>GTP</name>
        <dbReference type="ChEBI" id="CHEBI:37565"/>
    </ligand>
</feature>
<feature type="binding site" evidence="2">
    <location>
        <position position="139"/>
    </location>
    <ligand>
        <name>GTP</name>
        <dbReference type="ChEBI" id="CHEBI:37565"/>
    </ligand>
</feature>
<feature type="binding site" evidence="2">
    <location>
        <position position="161"/>
    </location>
    <ligand>
        <name>GTP</name>
        <dbReference type="ChEBI" id="CHEBI:37565"/>
    </ligand>
</feature>
<feature type="binding site" evidence="2">
    <location>
        <position position="172"/>
    </location>
    <ligand>
        <name>GTP</name>
        <dbReference type="ChEBI" id="CHEBI:37565"/>
    </ligand>
</feature>
<feature type="binding site" evidence="2">
    <location>
        <position position="201"/>
    </location>
    <ligand>
        <name>GTP</name>
        <dbReference type="ChEBI" id="CHEBI:37565"/>
    </ligand>
</feature>
<feature type="modified residue" description="N6-succinyllysine" evidence="3">
    <location>
        <position position="20"/>
    </location>
</feature>
<feature type="modified residue" description="N6-acetyllysine; alternate" evidence="3">
    <location>
        <position position="29"/>
    </location>
</feature>
<feature type="modified residue" description="N6-succinyllysine; alternate" evidence="3">
    <location>
        <position position="29"/>
    </location>
</feature>
<feature type="modified residue" description="N6-acetyllysine" evidence="3">
    <location>
        <position position="34"/>
    </location>
</feature>
<feature type="modified residue" description="Phosphoserine" evidence="3">
    <location>
        <position position="37"/>
    </location>
</feature>
<feature type="modified residue" description="N6-succinyllysine" evidence="3">
    <location>
        <position position="57"/>
    </location>
</feature>
<feature type="modified residue" description="N6-acetyllysine; alternate" evidence="3">
    <location>
        <position position="64"/>
    </location>
</feature>
<feature type="modified residue" description="N6-succinyllysine; alternate" evidence="3">
    <location>
        <position position="64"/>
    </location>
</feature>
<feature type="modified residue" description="N6-acetyllysine; alternate" evidence="3">
    <location>
        <position position="80"/>
    </location>
</feature>
<feature type="modified residue" description="N6-succinyllysine; alternate" evidence="3">
    <location>
        <position position="80"/>
    </location>
</feature>
<feature type="modified residue" description="N6-acetyllysine; alternate" evidence="3">
    <location>
        <position position="174"/>
    </location>
</feature>
<feature type="modified residue" description="N6-succinyllysine; alternate" evidence="3">
    <location>
        <position position="174"/>
    </location>
</feature>
<feature type="modified residue" description="N6-acetyllysine; alternate" evidence="3">
    <location>
        <position position="189"/>
    </location>
</feature>
<feature type="modified residue" description="N6-succinyllysine; alternate" evidence="3">
    <location>
        <position position="189"/>
    </location>
</feature>
<feature type="modified residue" description="N6-acetyllysine" evidence="3">
    <location>
        <position position="203"/>
    </location>
</feature>
<protein>
    <recommendedName>
        <fullName evidence="2">GTP:AMP phosphotransferase AK3, mitochondrial</fullName>
        <ecNumber evidence="2">2.7.4.10</ecNumber>
    </recommendedName>
    <alternativeName>
        <fullName evidence="5">Adenylate kinase 3</fullName>
    </alternativeName>
    <alternativeName>
        <fullName evidence="6">Adenylate kinase 3 alpha-like 1</fullName>
    </alternativeName>
    <alternativeName>
        <fullName evidence="5">Adenylate kinase isozyme 3</fullName>
    </alternativeName>
</protein>
<organism>
    <name type="scientific">Rattus norvegicus</name>
    <name type="common">Rat</name>
    <dbReference type="NCBI Taxonomy" id="10116"/>
    <lineage>
        <taxon>Eukaryota</taxon>
        <taxon>Metazoa</taxon>
        <taxon>Chordata</taxon>
        <taxon>Craniata</taxon>
        <taxon>Vertebrata</taxon>
        <taxon>Euteleostomi</taxon>
        <taxon>Mammalia</taxon>
        <taxon>Eutheria</taxon>
        <taxon>Euarchontoglires</taxon>
        <taxon>Glires</taxon>
        <taxon>Rodentia</taxon>
        <taxon>Myomorpha</taxon>
        <taxon>Muroidea</taxon>
        <taxon>Muridae</taxon>
        <taxon>Murinae</taxon>
        <taxon>Rattus</taxon>
    </lineage>
</organism>
<dbReference type="EC" id="2.7.4.10" evidence="2"/>
<dbReference type="EMBL" id="D13062">
    <property type="protein sequence ID" value="BAA02379.1"/>
    <property type="molecule type" value="mRNA"/>
</dbReference>
<dbReference type="PIR" id="JQ1945">
    <property type="entry name" value="JQ1945"/>
</dbReference>
<dbReference type="RefSeq" id="NP_037350.1">
    <property type="nucleotide sequence ID" value="NM_013218.1"/>
</dbReference>
<dbReference type="SMR" id="P29411"/>
<dbReference type="FunCoup" id="P29411">
    <property type="interactions" value="1460"/>
</dbReference>
<dbReference type="STRING" id="10116.ENSRNOP00000070076"/>
<dbReference type="BindingDB" id="P29411"/>
<dbReference type="ChEMBL" id="CHEMBL4799"/>
<dbReference type="iPTMnet" id="P29411"/>
<dbReference type="PhosphoSitePlus" id="P29411"/>
<dbReference type="jPOST" id="P29411"/>
<dbReference type="PaxDb" id="10116-ENSRNOP00000020744"/>
<dbReference type="GeneID" id="26956"/>
<dbReference type="KEGG" id="rno:26956"/>
<dbReference type="UCSC" id="RGD:619885">
    <property type="organism name" value="rat"/>
</dbReference>
<dbReference type="AGR" id="RGD:619885"/>
<dbReference type="CTD" id="50808"/>
<dbReference type="RGD" id="619885">
    <property type="gene designation" value="Ak3"/>
</dbReference>
<dbReference type="eggNOG" id="KOG3078">
    <property type="taxonomic scope" value="Eukaryota"/>
</dbReference>
<dbReference type="InParanoid" id="P29411"/>
<dbReference type="PhylomeDB" id="P29411"/>
<dbReference type="Reactome" id="R-RNO-983231">
    <property type="pathway name" value="Factors involved in megakaryocyte development and platelet production"/>
</dbReference>
<dbReference type="PRO" id="PR:P29411"/>
<dbReference type="Proteomes" id="UP000002494">
    <property type="component" value="Unplaced"/>
</dbReference>
<dbReference type="GO" id="GO:0005737">
    <property type="term" value="C:cytoplasm"/>
    <property type="evidence" value="ECO:0000318"/>
    <property type="project" value="GO_Central"/>
</dbReference>
<dbReference type="GO" id="GO:0005759">
    <property type="term" value="C:mitochondrial matrix"/>
    <property type="evidence" value="ECO:0000314"/>
    <property type="project" value="RGD"/>
</dbReference>
<dbReference type="GO" id="GO:0005739">
    <property type="term" value="C:mitochondrion"/>
    <property type="evidence" value="ECO:0000250"/>
    <property type="project" value="UniProtKB"/>
</dbReference>
<dbReference type="GO" id="GO:0004017">
    <property type="term" value="F:adenylate kinase activity"/>
    <property type="evidence" value="ECO:0000314"/>
    <property type="project" value="RGD"/>
</dbReference>
<dbReference type="GO" id="GO:0005524">
    <property type="term" value="F:ATP binding"/>
    <property type="evidence" value="ECO:0007669"/>
    <property type="project" value="InterPro"/>
</dbReference>
<dbReference type="GO" id="GO:0005525">
    <property type="term" value="F:GTP binding"/>
    <property type="evidence" value="ECO:0007669"/>
    <property type="project" value="UniProtKB-KW"/>
</dbReference>
<dbReference type="GO" id="GO:0042802">
    <property type="term" value="F:identical protein binding"/>
    <property type="evidence" value="ECO:0000314"/>
    <property type="project" value="RGD"/>
</dbReference>
<dbReference type="GO" id="GO:0046899">
    <property type="term" value="F:nucleoside triphosphate adenylate kinase activity"/>
    <property type="evidence" value="ECO:0000266"/>
    <property type="project" value="RGD"/>
</dbReference>
<dbReference type="GO" id="GO:0006172">
    <property type="term" value="P:ADP biosynthetic process"/>
    <property type="evidence" value="ECO:0000314"/>
    <property type="project" value="RGD"/>
</dbReference>
<dbReference type="GO" id="GO:0046033">
    <property type="term" value="P:AMP metabolic process"/>
    <property type="evidence" value="ECO:0000266"/>
    <property type="project" value="RGD"/>
</dbReference>
<dbReference type="GO" id="GO:0006756">
    <property type="term" value="P:AMP phosphorylation"/>
    <property type="evidence" value="ECO:0000314"/>
    <property type="project" value="RGD"/>
</dbReference>
<dbReference type="GO" id="GO:0021549">
    <property type="term" value="P:cerebellum development"/>
    <property type="evidence" value="ECO:0000270"/>
    <property type="project" value="RGD"/>
</dbReference>
<dbReference type="GO" id="GO:0046060">
    <property type="term" value="P:dATP metabolic process"/>
    <property type="evidence" value="ECO:0000314"/>
    <property type="project" value="RGD"/>
</dbReference>
<dbReference type="GO" id="GO:0046039">
    <property type="term" value="P:GTP metabolic process"/>
    <property type="evidence" value="ECO:0000266"/>
    <property type="project" value="RGD"/>
</dbReference>
<dbReference type="GO" id="GO:0046041">
    <property type="term" value="P:ITP metabolic process"/>
    <property type="evidence" value="ECO:0000266"/>
    <property type="project" value="RGD"/>
</dbReference>
<dbReference type="GO" id="GO:0001889">
    <property type="term" value="P:liver development"/>
    <property type="evidence" value="ECO:0000270"/>
    <property type="project" value="RGD"/>
</dbReference>
<dbReference type="GO" id="GO:0007517">
    <property type="term" value="P:muscle organ development"/>
    <property type="evidence" value="ECO:0000270"/>
    <property type="project" value="RGD"/>
</dbReference>
<dbReference type="GO" id="GO:0009142">
    <property type="term" value="P:nucleoside triphosphate biosynthetic process"/>
    <property type="evidence" value="ECO:0000318"/>
    <property type="project" value="GO_Central"/>
</dbReference>
<dbReference type="GO" id="GO:0021772">
    <property type="term" value="P:olfactory bulb development"/>
    <property type="evidence" value="ECO:0000270"/>
    <property type="project" value="RGD"/>
</dbReference>
<dbReference type="GO" id="GO:0042594">
    <property type="term" value="P:response to starvation"/>
    <property type="evidence" value="ECO:0000270"/>
    <property type="project" value="RGD"/>
</dbReference>
<dbReference type="GO" id="GO:0046051">
    <property type="term" value="P:UTP metabolic process"/>
    <property type="evidence" value="ECO:0000266"/>
    <property type="project" value="RGD"/>
</dbReference>
<dbReference type="CDD" id="cd01428">
    <property type="entry name" value="ADK"/>
    <property type="match status" value="1"/>
</dbReference>
<dbReference type="FunFam" id="3.40.50.300:FF:000106">
    <property type="entry name" value="Adenylate kinase mitochondrial"/>
    <property type="match status" value="1"/>
</dbReference>
<dbReference type="Gene3D" id="3.40.50.300">
    <property type="entry name" value="P-loop containing nucleotide triphosphate hydrolases"/>
    <property type="match status" value="1"/>
</dbReference>
<dbReference type="HAMAP" id="MF_00235">
    <property type="entry name" value="Adenylate_kinase_Adk"/>
    <property type="match status" value="1"/>
</dbReference>
<dbReference type="HAMAP" id="MF_03169">
    <property type="entry name" value="Adenylate_kinase_AK3"/>
    <property type="match status" value="1"/>
</dbReference>
<dbReference type="InterPro" id="IPR006259">
    <property type="entry name" value="Adenyl_kin_sub"/>
</dbReference>
<dbReference type="InterPro" id="IPR000850">
    <property type="entry name" value="Adenylat/UMP-CMP_kin"/>
</dbReference>
<dbReference type="InterPro" id="IPR033690">
    <property type="entry name" value="Adenylat_kinase_CS"/>
</dbReference>
<dbReference type="InterPro" id="IPR007862">
    <property type="entry name" value="Adenylate_kinase_lid-dom"/>
</dbReference>
<dbReference type="InterPro" id="IPR036193">
    <property type="entry name" value="ADK_active_lid_dom_sf"/>
</dbReference>
<dbReference type="InterPro" id="IPR028586">
    <property type="entry name" value="AK3/Ak4_mitochondrial"/>
</dbReference>
<dbReference type="InterPro" id="IPR027417">
    <property type="entry name" value="P-loop_NTPase"/>
</dbReference>
<dbReference type="NCBIfam" id="TIGR01351">
    <property type="entry name" value="adk"/>
    <property type="match status" value="1"/>
</dbReference>
<dbReference type="PANTHER" id="PTHR23359">
    <property type="entry name" value="NUCLEOTIDE KINASE"/>
    <property type="match status" value="1"/>
</dbReference>
<dbReference type="Pfam" id="PF00406">
    <property type="entry name" value="ADK"/>
    <property type="match status" value="1"/>
</dbReference>
<dbReference type="Pfam" id="PF05191">
    <property type="entry name" value="ADK_lid"/>
    <property type="match status" value="1"/>
</dbReference>
<dbReference type="PRINTS" id="PR00094">
    <property type="entry name" value="ADENYLTKNASE"/>
</dbReference>
<dbReference type="SUPFAM" id="SSF57774">
    <property type="entry name" value="Microbial and mitochondrial ADK, insert 'zinc finger' domain"/>
    <property type="match status" value="1"/>
</dbReference>
<dbReference type="SUPFAM" id="SSF52540">
    <property type="entry name" value="P-loop containing nucleoside triphosphate hydrolases"/>
    <property type="match status" value="1"/>
</dbReference>
<dbReference type="PROSITE" id="PS00113">
    <property type="entry name" value="ADENYLATE_KINASE"/>
    <property type="match status" value="1"/>
</dbReference>